<organism>
    <name type="scientific">Cupriavidus taiwanensis (strain DSM 17343 / BCRC 17206 / CCUG 44338 / CIP 107171 / LMG 19424 / R1)</name>
    <name type="common">Ralstonia taiwanensis (strain LMG 19424)</name>
    <dbReference type="NCBI Taxonomy" id="977880"/>
    <lineage>
        <taxon>Bacteria</taxon>
        <taxon>Pseudomonadati</taxon>
        <taxon>Pseudomonadota</taxon>
        <taxon>Betaproteobacteria</taxon>
        <taxon>Burkholderiales</taxon>
        <taxon>Burkholderiaceae</taxon>
        <taxon>Cupriavidus</taxon>
    </lineage>
</organism>
<accession>B3R523</accession>
<name>YCIB_CUPTR</name>
<comment type="function">
    <text evidence="1">Plays a role in cell envelope biogenesis, maintenance of cell envelope integrity and membrane homeostasis.</text>
</comment>
<comment type="subcellular location">
    <subcellularLocation>
        <location evidence="1">Cell inner membrane</location>
        <topology evidence="1">Multi-pass membrane protein</topology>
    </subcellularLocation>
</comment>
<comment type="similarity">
    <text evidence="1">Belongs to the YciB family.</text>
</comment>
<reference key="1">
    <citation type="journal article" date="2008" name="Genome Res.">
        <title>Genome sequence of the beta-rhizobium Cupriavidus taiwanensis and comparative genomics of rhizobia.</title>
        <authorList>
            <person name="Amadou C."/>
            <person name="Pascal G."/>
            <person name="Mangenot S."/>
            <person name="Glew M."/>
            <person name="Bontemps C."/>
            <person name="Capela D."/>
            <person name="Carrere S."/>
            <person name="Cruveiller S."/>
            <person name="Dossat C."/>
            <person name="Lajus A."/>
            <person name="Marchetti M."/>
            <person name="Poinsot V."/>
            <person name="Rouy Z."/>
            <person name="Servin B."/>
            <person name="Saad M."/>
            <person name="Schenowitz C."/>
            <person name="Barbe V."/>
            <person name="Batut J."/>
            <person name="Medigue C."/>
            <person name="Masson-Boivin C."/>
        </authorList>
    </citation>
    <scope>NUCLEOTIDE SEQUENCE [LARGE SCALE GENOMIC DNA]</scope>
    <source>
        <strain>DSM 17343 / BCRC 17206 / CCUG 44338 / CIP 107171 / LMG 19424 / R1</strain>
    </source>
</reference>
<gene>
    <name evidence="1" type="primary">yciB</name>
    <name type="ordered locus">RALTA_A1457</name>
</gene>
<evidence type="ECO:0000255" key="1">
    <source>
        <dbReference type="HAMAP-Rule" id="MF_00189"/>
    </source>
</evidence>
<feature type="chain" id="PRO_1000098878" description="Inner membrane-spanning protein YciB">
    <location>
        <begin position="1"/>
        <end position="179"/>
    </location>
</feature>
<feature type="transmembrane region" description="Helical" evidence="1">
    <location>
        <begin position="3"/>
        <end position="23"/>
    </location>
</feature>
<feature type="transmembrane region" description="Helical" evidence="1">
    <location>
        <begin position="24"/>
        <end position="44"/>
    </location>
</feature>
<feature type="transmembrane region" description="Helical" evidence="1">
    <location>
        <begin position="49"/>
        <end position="69"/>
    </location>
</feature>
<feature type="transmembrane region" description="Helical" evidence="1">
    <location>
        <begin position="76"/>
        <end position="96"/>
    </location>
</feature>
<feature type="transmembrane region" description="Helical" evidence="1">
    <location>
        <begin position="121"/>
        <end position="141"/>
    </location>
</feature>
<feature type="transmembrane region" description="Helical" evidence="1">
    <location>
        <begin position="149"/>
        <end position="169"/>
    </location>
</feature>
<sequence>MKFLFDLFPVILFFAAFKLADIYTATAVAIGATVLQIGWVWFRHRKVEPMQWVSLLIIAVFGGATLVLHNETFIKWKPTVLYWLFAAALLGSVLVWRKNLIRAMMEKQVSLPDPVWARLNLAWAGFFAAMGVLNLYVAYQFSTEAWVNFKLFGSMGLMLVFIVAQSVWLSRHMPENTQD</sequence>
<dbReference type="EMBL" id="CU633749">
    <property type="protein sequence ID" value="CAQ69406.1"/>
    <property type="molecule type" value="Genomic_DNA"/>
</dbReference>
<dbReference type="RefSeq" id="WP_012352729.1">
    <property type="nucleotide sequence ID" value="NC_010528.1"/>
</dbReference>
<dbReference type="GeneID" id="29761659"/>
<dbReference type="KEGG" id="cti:RALTA_A1457"/>
<dbReference type="eggNOG" id="COG2917">
    <property type="taxonomic scope" value="Bacteria"/>
</dbReference>
<dbReference type="HOGENOM" id="CLU_089554_2_0_4"/>
<dbReference type="BioCyc" id="CTAI977880:RALTA_RS06975-MONOMER"/>
<dbReference type="Proteomes" id="UP000001692">
    <property type="component" value="Chromosome 1"/>
</dbReference>
<dbReference type="GO" id="GO:0005886">
    <property type="term" value="C:plasma membrane"/>
    <property type="evidence" value="ECO:0007669"/>
    <property type="project" value="UniProtKB-SubCell"/>
</dbReference>
<dbReference type="HAMAP" id="MF_00189">
    <property type="entry name" value="YciB"/>
    <property type="match status" value="1"/>
</dbReference>
<dbReference type="InterPro" id="IPR006008">
    <property type="entry name" value="YciB"/>
</dbReference>
<dbReference type="NCBIfam" id="TIGR00997">
    <property type="entry name" value="ispZ"/>
    <property type="match status" value="1"/>
</dbReference>
<dbReference type="NCBIfam" id="NF001324">
    <property type="entry name" value="PRK00259.1-2"/>
    <property type="match status" value="1"/>
</dbReference>
<dbReference type="NCBIfam" id="NF001325">
    <property type="entry name" value="PRK00259.1-3"/>
    <property type="match status" value="1"/>
</dbReference>
<dbReference type="PANTHER" id="PTHR36917:SF1">
    <property type="entry name" value="INNER MEMBRANE-SPANNING PROTEIN YCIB"/>
    <property type="match status" value="1"/>
</dbReference>
<dbReference type="PANTHER" id="PTHR36917">
    <property type="entry name" value="INTRACELLULAR SEPTATION PROTEIN A-RELATED"/>
    <property type="match status" value="1"/>
</dbReference>
<dbReference type="Pfam" id="PF04279">
    <property type="entry name" value="IspA"/>
    <property type="match status" value="1"/>
</dbReference>
<keyword id="KW-0997">Cell inner membrane</keyword>
<keyword id="KW-1003">Cell membrane</keyword>
<keyword id="KW-0472">Membrane</keyword>
<keyword id="KW-0812">Transmembrane</keyword>
<keyword id="KW-1133">Transmembrane helix</keyword>
<protein>
    <recommendedName>
        <fullName evidence="1">Inner membrane-spanning protein YciB</fullName>
    </recommendedName>
</protein>
<proteinExistence type="inferred from homology"/>